<gene>
    <name evidence="1" type="primary">TRM1</name>
</gene>
<dbReference type="EMBL" id="AF084543">
    <property type="protein sequence ID" value="AAD42934.1"/>
    <property type="molecule type" value="Genomic_DNA"/>
</dbReference>
<dbReference type="SMR" id="Q9WRL6"/>
<dbReference type="KEGG" id="vg:921237"/>
<dbReference type="GO" id="GO:0042025">
    <property type="term" value="C:host cell nucleus"/>
    <property type="evidence" value="ECO:0007669"/>
    <property type="project" value="UniProtKB-SubCell"/>
</dbReference>
<dbReference type="GO" id="GO:0005524">
    <property type="term" value="F:ATP binding"/>
    <property type="evidence" value="ECO:0007669"/>
    <property type="project" value="UniProtKB-KW"/>
</dbReference>
<dbReference type="GO" id="GO:0008270">
    <property type="term" value="F:zinc ion binding"/>
    <property type="evidence" value="ECO:0007669"/>
    <property type="project" value="UniProtKB-KW"/>
</dbReference>
<dbReference type="GO" id="GO:0019073">
    <property type="term" value="P:viral DNA genome packaging"/>
    <property type="evidence" value="ECO:0007669"/>
    <property type="project" value="InterPro"/>
</dbReference>
<dbReference type="HAMAP" id="MF_04014">
    <property type="entry name" value="HSV_TRM1"/>
    <property type="match status" value="1"/>
</dbReference>
<dbReference type="InterPro" id="IPR000501">
    <property type="entry name" value="UL28/UL56"/>
</dbReference>
<dbReference type="Pfam" id="PF01366">
    <property type="entry name" value="PRTP"/>
    <property type="match status" value="1"/>
</dbReference>
<evidence type="ECO:0000255" key="1">
    <source>
        <dbReference type="HAMAP-Rule" id="MF_04014"/>
    </source>
</evidence>
<evidence type="ECO:0000256" key="2">
    <source>
        <dbReference type="SAM" id="MobiDB-lite"/>
    </source>
</evidence>
<sequence>MNTLQRLCVVCSKCNECAMELECLKYCDPAIVLVDSAPFKRNALTVVHLYRRLCPALAEQNARYQASLITLYLEMLLRCLYEDVLLVDEALGEFERHGDRQRYYRRVLRLDRCACHDTLEVTFTERIRLTVDVATLNEVERLLCKINCVYGVLEPTRGLELCRRLLSLMGRLCGISPVAAPEAYVENLTCLQCYEELAAVPNQGRSILKRLRGLLCDHLTVRKSLVQLETGIQTMEQDIVETVGSRPRLSSLLELLKGLSSSAAVSHAYISEAEDTLRRYNLFTDIPPRIYSLSDFTYWSKTSEVIVQRVNVTVQQLNMYHSLCRTLRNELGQYLYGDRVEDLFTLSEAQLGEDERLYVGSIYAAPERIVDLMTSLSLQSFENNPVFNKLHENNEIYSKIRSLLEEIRRPLDGAGTRGAAAATAAGARGAAEGTGGAAAAGGAAAAAGEAAGGPFQCGDPAARAHDVVREVHVRKKAYLQKVSELGYNRVMQCIKGQEKLIKKLVNVNLLGTVCFEVLAKVINGFIRRRAYLERVDGVVDVDRLLQYDDHLYVVNNLVHRRLPAESLPALGQEFYRFVNGPVFQHHADRYPLPYNIDMAYACDNAGMLPHLKEDLVRLAEGTVAPSEWMVAPYRRFFDLGAALDLNELQKGFWAHVREIVFSVALYNEAFGKELRLCRADEPVDEERERLVVTYNVDGPLFLYAGGGVWKSKDLYLLLYQHLNGAAAPPPPAAPSPPPAEPATTAGASRKRPAVESPGVLLDLVRDADRESSLVPDCLLYDP</sequence>
<protein>
    <recommendedName>
        <fullName evidence="1">Tripartite terminase subunit 1</fullName>
    </recommendedName>
</protein>
<proteinExistence type="inferred from homology"/>
<reference key="1">
    <citation type="journal article" date="1999" name="Virus Res.">
        <title>Structural organization of a conserved gene cluster of Tupaia herpesvirus encoding the DNA polymerase, glycoprotein B, a probable processing and transport protein, and the major DNA binding protein.</title>
        <authorList>
            <person name="Bahr U."/>
            <person name="Springfeld C."/>
            <person name="Tidona C.A."/>
            <person name="Darai G."/>
        </authorList>
    </citation>
    <scope>NUCLEOTIDE SEQUENCE [GENOMIC DNA]</scope>
</reference>
<name>TRM1_TUHV2</name>
<organism>
    <name type="scientific">Tupaiid herpesvirus (strain 2)</name>
    <name type="common">TuHV-2</name>
    <name type="synonym">Herpesvirus tupaia (strain 2)</name>
    <dbReference type="NCBI Taxonomy" id="132678"/>
    <lineage>
        <taxon>Viruses</taxon>
        <taxon>Duplodnaviria</taxon>
        <taxon>Heunggongvirae</taxon>
        <taxon>Peploviricota</taxon>
        <taxon>Herviviricetes</taxon>
        <taxon>Herpesvirales</taxon>
        <taxon>Orthoherpesviridae</taxon>
        <taxon>Betaherpesvirinae</taxon>
    </lineage>
</organism>
<keyword id="KW-0067">ATP-binding</keyword>
<keyword id="KW-1048">Host nucleus</keyword>
<keyword id="KW-0426">Late protein</keyword>
<keyword id="KW-0479">Metal-binding</keyword>
<keyword id="KW-0547">Nucleotide-binding</keyword>
<keyword id="KW-0231">Viral genome packaging</keyword>
<keyword id="KW-1188">Viral release from host cell</keyword>
<keyword id="KW-0862">Zinc</keyword>
<keyword id="KW-0863">Zinc-finger</keyword>
<comment type="function">
    <text evidence="1">Component of the molecular motor that translocates viral genomic DNA in empty capsid during DNA packaging. Forms a tripartite terminase complex together with TRM2 and TRM3 in the host cytoplasm. Once the complex reaches the host nucleus, it interacts with the capsid portal vertex. This portal forms a ring in which genomic DNA is translocated into the capsid. TRM1 carries an endonuclease activity that plays an important role for the cleavage of concatemeric viral DNA into unit length genomes.</text>
</comment>
<comment type="subunit">
    <text evidence="1">Associates with TRM2 and TRM3 to form the tripartite terminase complex. Interacts with portal protein.</text>
</comment>
<comment type="subcellular location">
    <subcellularLocation>
        <location evidence="1">Host nucleus</location>
    </subcellularLocation>
    <text evidence="1">Found associated with the external surface of the viral capsid during assembly and DNA packaging, but seems absent in extracellular mature virions.</text>
</comment>
<comment type="similarity">
    <text evidence="1">Belongs to the herpesviridae TRM1 protein family.</text>
</comment>
<accession>Q9WRL6</accession>
<feature type="chain" id="PRO_0000115886" description="Tripartite terminase subunit 1">
    <location>
        <begin position="1"/>
        <end position="782"/>
    </location>
</feature>
<feature type="zinc finger region" description="C3H1-type" evidence="1">
    <location>
        <begin position="190"/>
        <end position="218"/>
    </location>
</feature>
<feature type="region of interest" description="Disordered" evidence="2">
    <location>
        <begin position="727"/>
        <end position="754"/>
    </location>
</feature>
<feature type="compositionally biased region" description="Pro residues" evidence="2">
    <location>
        <begin position="727"/>
        <end position="740"/>
    </location>
</feature>
<feature type="binding site" evidence="1">
    <location>
        <begin position="666"/>
        <end position="673"/>
    </location>
    <ligand>
        <name>ATP</name>
        <dbReference type="ChEBI" id="CHEBI:30616"/>
    </ligand>
</feature>
<organismHost>
    <name type="scientific">Tupaia belangeri</name>
    <name type="common">Common tree shrew</name>
    <name type="synonym">Tupaia glis belangeri</name>
    <dbReference type="NCBI Taxonomy" id="37347"/>
</organismHost>